<protein>
    <recommendedName>
        <fullName evidence="1">Orotate phosphoribosyltransferase</fullName>
        <shortName evidence="1">OPRT</shortName>
        <shortName evidence="1">OPRTase</shortName>
        <ecNumber evidence="1">2.4.2.10</ecNumber>
    </recommendedName>
</protein>
<feature type="chain" id="PRO_0000110750" description="Orotate phosphoribosyltransferase">
    <location>
        <begin position="1"/>
        <end position="209"/>
    </location>
</feature>
<feature type="binding site" evidence="1">
    <location>
        <position position="96"/>
    </location>
    <ligand>
        <name>5-phospho-alpha-D-ribose 1-diphosphate</name>
        <dbReference type="ChEBI" id="CHEBI:58017"/>
        <note>ligand shared between dimeric partners</note>
    </ligand>
</feature>
<feature type="binding site" evidence="1">
    <location>
        <position position="100"/>
    </location>
    <ligand>
        <name>5-phospho-alpha-D-ribose 1-diphosphate</name>
        <dbReference type="ChEBI" id="CHEBI:58017"/>
        <note>ligand shared between dimeric partners</note>
    </ligand>
</feature>
<feature type="binding site" evidence="1">
    <location>
        <position position="102"/>
    </location>
    <ligand>
        <name>5-phospho-alpha-D-ribose 1-diphosphate</name>
        <dbReference type="ChEBI" id="CHEBI:58017"/>
        <note>ligand shared between dimeric partners</note>
    </ligand>
</feature>
<feature type="binding site" description="in other chain" evidence="1">
    <location>
        <begin position="122"/>
        <end position="130"/>
    </location>
    <ligand>
        <name>5-phospho-alpha-D-ribose 1-diphosphate</name>
        <dbReference type="ChEBI" id="CHEBI:58017"/>
        <note>ligand shared between dimeric partners</note>
    </ligand>
</feature>
<feature type="binding site" evidence="1">
    <location>
        <position position="126"/>
    </location>
    <ligand>
        <name>orotate</name>
        <dbReference type="ChEBI" id="CHEBI:30839"/>
    </ligand>
</feature>
<feature type="helix" evidence="2">
    <location>
        <begin position="1"/>
        <end position="13"/>
    </location>
</feature>
<feature type="strand" evidence="2">
    <location>
        <begin position="16"/>
        <end position="19"/>
    </location>
</feature>
<feature type="strand" evidence="2">
    <location>
        <begin position="32"/>
        <end position="37"/>
    </location>
</feature>
<feature type="helix" evidence="2">
    <location>
        <begin position="41"/>
        <end position="44"/>
    </location>
</feature>
<feature type="helix" evidence="2">
    <location>
        <begin position="46"/>
        <end position="63"/>
    </location>
</feature>
<feature type="strand" evidence="2">
    <location>
        <begin position="69"/>
        <end position="73"/>
    </location>
</feature>
<feature type="turn" evidence="2">
    <location>
        <begin position="74"/>
        <end position="77"/>
    </location>
</feature>
<feature type="helix" evidence="2">
    <location>
        <begin position="78"/>
        <end position="87"/>
    </location>
</feature>
<feature type="strand" evidence="2">
    <location>
        <begin position="92"/>
        <end position="95"/>
    </location>
</feature>
<feature type="strand" evidence="2">
    <location>
        <begin position="108"/>
        <end position="110"/>
    </location>
</feature>
<feature type="strand" evidence="2">
    <location>
        <begin position="117"/>
        <end position="128"/>
    </location>
</feature>
<feature type="helix" evidence="2">
    <location>
        <begin position="129"/>
        <end position="140"/>
    </location>
</feature>
<feature type="strand" evidence="2">
    <location>
        <begin position="144"/>
        <end position="153"/>
    </location>
</feature>
<feature type="helix" evidence="2">
    <location>
        <begin position="157"/>
        <end position="166"/>
    </location>
</feature>
<feature type="strand" evidence="2">
    <location>
        <begin position="170"/>
        <end position="174"/>
    </location>
</feature>
<feature type="helix" evidence="2">
    <location>
        <begin position="176"/>
        <end position="185"/>
    </location>
</feature>
<feature type="helix" evidence="2">
    <location>
        <begin position="191"/>
        <end position="202"/>
    </location>
</feature>
<feature type="turn" evidence="2">
    <location>
        <begin position="204"/>
        <end position="208"/>
    </location>
</feature>
<name>PYRE_STRMU</name>
<sequence>MTLAKDIARDLLDIKAVYLKPEEPFTWASGIKSPIYTDNRITLSYPETRTLIENGFVETIKEAFPEVEVIAGTATAGIPHGAIIADKMNLPFAYIRSKPKDHGAGNQIEGRVTKGQKMVIIEDLISTGGSVLDAVAAAQREGADVLGVVAIFTYELPKATANFEKASVKLVTLSNYSELIKVAKVQGYIDADGLTLLKKFKENQETWQD</sequence>
<organism>
    <name type="scientific">Streptococcus mutans serotype c (strain ATCC 700610 / UA159)</name>
    <dbReference type="NCBI Taxonomy" id="210007"/>
    <lineage>
        <taxon>Bacteria</taxon>
        <taxon>Bacillati</taxon>
        <taxon>Bacillota</taxon>
        <taxon>Bacilli</taxon>
        <taxon>Lactobacillales</taxon>
        <taxon>Streptococcaceae</taxon>
        <taxon>Streptococcus</taxon>
    </lineage>
</organism>
<accession>Q8DTV2</accession>
<reference key="1">
    <citation type="journal article" date="2002" name="Proc. Natl. Acad. Sci. U.S.A.">
        <title>Genome sequence of Streptococcus mutans UA159, a cariogenic dental pathogen.</title>
        <authorList>
            <person name="Ajdic D.J."/>
            <person name="McShan W.M."/>
            <person name="McLaughlin R.E."/>
            <person name="Savic G."/>
            <person name="Chang J."/>
            <person name="Carson M.B."/>
            <person name="Primeaux C."/>
            <person name="Tian R."/>
            <person name="Kenton S."/>
            <person name="Jia H.G."/>
            <person name="Lin S.P."/>
            <person name="Qian Y."/>
            <person name="Li S."/>
            <person name="Zhu H."/>
            <person name="Najar F.Z."/>
            <person name="Lai H."/>
            <person name="White J."/>
            <person name="Roe B.A."/>
            <person name="Ferretti J.J."/>
        </authorList>
    </citation>
    <scope>NUCLEOTIDE SEQUENCE [LARGE SCALE GENOMIC DNA]</scope>
    <source>
        <strain>ATCC 700610 / UA159</strain>
    </source>
</reference>
<proteinExistence type="evidence at protein level"/>
<dbReference type="EC" id="2.4.2.10" evidence="1"/>
<dbReference type="EMBL" id="AE014133">
    <property type="protein sequence ID" value="AAN58906.1"/>
    <property type="molecule type" value="Genomic_DNA"/>
</dbReference>
<dbReference type="RefSeq" id="NP_721600.1">
    <property type="nucleotide sequence ID" value="NC_004350.2"/>
</dbReference>
<dbReference type="RefSeq" id="WP_002263221.1">
    <property type="nucleotide sequence ID" value="NC_004350.2"/>
</dbReference>
<dbReference type="PDB" id="3DEZ">
    <property type="method" value="X-ray"/>
    <property type="resolution" value="2.40 A"/>
    <property type="chains" value="A/B=1-209"/>
</dbReference>
<dbReference type="PDBsum" id="3DEZ"/>
<dbReference type="SMR" id="Q8DTV2"/>
<dbReference type="STRING" id="210007.SMU_1221"/>
<dbReference type="GeneID" id="93859299"/>
<dbReference type="KEGG" id="smu:SMU_1221"/>
<dbReference type="PATRIC" id="fig|210007.7.peg.1094"/>
<dbReference type="eggNOG" id="COG0461">
    <property type="taxonomic scope" value="Bacteria"/>
</dbReference>
<dbReference type="HOGENOM" id="CLU_074878_1_1_9"/>
<dbReference type="OrthoDB" id="9802134at2"/>
<dbReference type="PhylomeDB" id="Q8DTV2"/>
<dbReference type="BRENDA" id="2.4.2.10">
    <property type="organism ID" value="5941"/>
</dbReference>
<dbReference type="UniPathway" id="UPA00070">
    <property type="reaction ID" value="UER00119"/>
</dbReference>
<dbReference type="EvolutionaryTrace" id="Q8DTV2"/>
<dbReference type="Proteomes" id="UP000002512">
    <property type="component" value="Chromosome"/>
</dbReference>
<dbReference type="GO" id="GO:0000287">
    <property type="term" value="F:magnesium ion binding"/>
    <property type="evidence" value="ECO:0007669"/>
    <property type="project" value="UniProtKB-UniRule"/>
</dbReference>
<dbReference type="GO" id="GO:0004588">
    <property type="term" value="F:orotate phosphoribosyltransferase activity"/>
    <property type="evidence" value="ECO:0007669"/>
    <property type="project" value="UniProtKB-UniRule"/>
</dbReference>
<dbReference type="GO" id="GO:0044205">
    <property type="term" value="P:'de novo' UMP biosynthetic process"/>
    <property type="evidence" value="ECO:0007669"/>
    <property type="project" value="UniProtKB-UniRule"/>
</dbReference>
<dbReference type="GO" id="GO:0019856">
    <property type="term" value="P:pyrimidine nucleobase biosynthetic process"/>
    <property type="evidence" value="ECO:0007669"/>
    <property type="project" value="TreeGrafter"/>
</dbReference>
<dbReference type="CDD" id="cd06223">
    <property type="entry name" value="PRTases_typeI"/>
    <property type="match status" value="1"/>
</dbReference>
<dbReference type="Gene3D" id="3.40.50.2020">
    <property type="match status" value="1"/>
</dbReference>
<dbReference type="HAMAP" id="MF_01208">
    <property type="entry name" value="PyrE"/>
    <property type="match status" value="1"/>
</dbReference>
<dbReference type="InterPro" id="IPR023031">
    <property type="entry name" value="OPRT"/>
</dbReference>
<dbReference type="InterPro" id="IPR004467">
    <property type="entry name" value="Or_phspho_trans_dom"/>
</dbReference>
<dbReference type="InterPro" id="IPR000836">
    <property type="entry name" value="PRibTrfase_dom"/>
</dbReference>
<dbReference type="InterPro" id="IPR029057">
    <property type="entry name" value="PRTase-like"/>
</dbReference>
<dbReference type="NCBIfam" id="TIGR00336">
    <property type="entry name" value="pyrE"/>
    <property type="match status" value="1"/>
</dbReference>
<dbReference type="PANTHER" id="PTHR19278">
    <property type="entry name" value="OROTATE PHOSPHORIBOSYLTRANSFERASE"/>
    <property type="match status" value="1"/>
</dbReference>
<dbReference type="PANTHER" id="PTHR19278:SF9">
    <property type="entry name" value="URIDINE 5'-MONOPHOSPHATE SYNTHASE"/>
    <property type="match status" value="1"/>
</dbReference>
<dbReference type="Pfam" id="PF00156">
    <property type="entry name" value="Pribosyltran"/>
    <property type="match status" value="1"/>
</dbReference>
<dbReference type="SUPFAM" id="SSF53271">
    <property type="entry name" value="PRTase-like"/>
    <property type="match status" value="1"/>
</dbReference>
<dbReference type="PROSITE" id="PS00103">
    <property type="entry name" value="PUR_PYR_PR_TRANSFER"/>
    <property type="match status" value="1"/>
</dbReference>
<evidence type="ECO:0000255" key="1">
    <source>
        <dbReference type="HAMAP-Rule" id="MF_01208"/>
    </source>
</evidence>
<evidence type="ECO:0007829" key="2">
    <source>
        <dbReference type="PDB" id="3DEZ"/>
    </source>
</evidence>
<gene>
    <name evidence="1" type="primary">pyrE</name>
    <name type="ordered locus">SMU_1221</name>
</gene>
<comment type="function">
    <text evidence="1">Catalyzes the transfer of a ribosyl phosphate group from 5-phosphoribose 1-diphosphate to orotate, leading to the formation of orotidine monophosphate (OMP).</text>
</comment>
<comment type="catalytic activity">
    <reaction evidence="1">
        <text>orotidine 5'-phosphate + diphosphate = orotate + 5-phospho-alpha-D-ribose 1-diphosphate</text>
        <dbReference type="Rhea" id="RHEA:10380"/>
        <dbReference type="ChEBI" id="CHEBI:30839"/>
        <dbReference type="ChEBI" id="CHEBI:33019"/>
        <dbReference type="ChEBI" id="CHEBI:57538"/>
        <dbReference type="ChEBI" id="CHEBI:58017"/>
        <dbReference type="EC" id="2.4.2.10"/>
    </reaction>
</comment>
<comment type="cofactor">
    <cofactor evidence="1">
        <name>Mg(2+)</name>
        <dbReference type="ChEBI" id="CHEBI:18420"/>
    </cofactor>
</comment>
<comment type="pathway">
    <text evidence="1">Pyrimidine metabolism; UMP biosynthesis via de novo pathway; UMP from orotate: step 1/2.</text>
</comment>
<comment type="subunit">
    <text evidence="1">Homodimer.</text>
</comment>
<comment type="similarity">
    <text evidence="1">Belongs to the purine/pyrimidine phosphoribosyltransferase family. PyrE subfamily.</text>
</comment>
<keyword id="KW-0002">3D-structure</keyword>
<keyword id="KW-0328">Glycosyltransferase</keyword>
<keyword id="KW-0460">Magnesium</keyword>
<keyword id="KW-0665">Pyrimidine biosynthesis</keyword>
<keyword id="KW-1185">Reference proteome</keyword>
<keyword id="KW-0808">Transferase</keyword>